<comment type="function">
    <text evidence="2 3">Non-catalytic component of the NSL histone acetyltransferase complex, a multiprotein complex that mediates histone H4 acetylation at 'Lys-5'- and 'Lys-8' (H4K5ac and H4K8ac) at transcription start sites and promotes transcription initiation. Required for NSL complex stability and for transcription of intraciliary transport genes in both ciliated and non-ciliated cells by regulating histone H4 acetylation at 'Lys-5'- and 'Lys-12' (H4K5ac and H4K12ac). This is necessary for cilium assembly in ciliated cells and for organization of the microtubule cytoskeleton in non-ciliated cells. Required within the NSL complex to maintain nuclear architecture stability by promoting KAT8-mediated acetylation of lamin LMNA.</text>
</comment>
<comment type="subunit">
    <text evidence="3">Component of the NSL complex at least composed of KAT8/MOF, KANSL1, KANSL2, KANSL3, MCRS1, PHF20, OGT1/OGT, WDR5 and HCFC1.</text>
</comment>
<comment type="subcellular location">
    <subcellularLocation>
        <location evidence="3">Nucleus</location>
    </subcellularLocation>
    <subcellularLocation>
        <location evidence="2">Mitochondrion</location>
    </subcellularLocation>
</comment>
<comment type="alternative products">
    <event type="alternative splicing"/>
    <isoform>
        <id>Q2NL14-1</id>
        <name>1</name>
        <sequence type="displayed"/>
    </isoform>
    <isoform>
        <id>Q2NL14-2</id>
        <name>2</name>
        <sequence type="described" ref="VSP_023264 VSP_023265"/>
    </isoform>
</comment>
<comment type="sequence caution" evidence="6">
    <conflict type="erroneous initiation">
        <sequence resource="EMBL-CDS" id="AAX46633"/>
    </conflict>
    <text>Truncated N-terminus.</text>
</comment>
<proteinExistence type="evidence at transcript level"/>
<sequence length="458" mass="51208">MNRIRIHVLPTNRGRITPVPRSQEPLSCSFTHRPCSQPRLEGQEFCIKHILEDKNAPFKQCSYVSTKNGKRCPSAAPKPEKKDGASFCAEHARRNALALHAQMKKTSPGPVGETLLCQLSSYAKTELGSQTPESSRSEASRILDEDSWSDGDQEPITVDQTWRGDPDSEADSIDSDQEDPLKHAGVYTAEEVALIMREKLIRLQSLYIDQFKRLQHLLKEKKRRYLHNRKVEHEALGSSLLTGPEGLLAKERENLKRLKCLRRYRQRYGVEALLHRQLKERRMLATDGAAQQAHTTRSSQRCLAFVDDVRCSNQSLPMTRHCLTHICQDTNQVLFKCCQGSEEVPCNKPVPVSLSEDPCCPLHFQLPPQMYKPEQDLDVVGDGMQCPPSPLLFDPSLTLEDHPVKEIAEGPVDILGQMQMAGDGCRSQGPRNSEKAPAPLPQSGIATANGKPEPTSVS</sequence>
<keyword id="KW-0025">Alternative splicing</keyword>
<keyword id="KW-0156">Chromatin regulator</keyword>
<keyword id="KW-1017">Isopeptide bond</keyword>
<keyword id="KW-0496">Mitochondrion</keyword>
<keyword id="KW-0539">Nucleus</keyword>
<keyword id="KW-0597">Phosphoprotein</keyword>
<keyword id="KW-1185">Reference proteome</keyword>
<keyword id="KW-0832">Ubl conjugation</keyword>
<gene>
    <name type="primary">KANSL2</name>
    <name type="synonym">NSL2</name>
</gene>
<protein>
    <recommendedName>
        <fullName>KAT8 regulatory NSL complex subunit 2</fullName>
    </recommendedName>
    <alternativeName>
        <fullName>NSL complex protein NSL2</fullName>
    </alternativeName>
    <alternativeName>
        <fullName>Non-specific lethal 2 homolog</fullName>
    </alternativeName>
</protein>
<reference key="1">
    <citation type="submission" date="2005-12" db="EMBL/GenBank/DDBJ databases">
        <authorList>
            <consortium name="NIH - Mammalian Gene Collection (MGC) project"/>
        </authorList>
    </citation>
    <scope>NUCLEOTIDE SEQUENCE [LARGE SCALE MRNA] (ISOFORM 1)</scope>
    <source>
        <strain>Crossbred X Angus</strain>
        <tissue>Liver</tissue>
    </source>
</reference>
<reference key="2">
    <citation type="journal article" date="2005" name="BMC Genomics">
        <title>Characterization of 954 bovine full-CDS cDNA sequences.</title>
        <authorList>
            <person name="Harhay G.P."/>
            <person name="Sonstegard T.S."/>
            <person name="Keele J.W."/>
            <person name="Heaton M.P."/>
            <person name="Clawson M.L."/>
            <person name="Snelling W.M."/>
            <person name="Wiedmann R.T."/>
            <person name="Van Tassell C.P."/>
            <person name="Smith T.P.L."/>
        </authorList>
    </citation>
    <scope>NUCLEOTIDE SEQUENCE [LARGE SCALE MRNA] OF 9-347 (ISOFORM 2)</scope>
</reference>
<accession>Q2NL14</accession>
<accession>Q58D11</accession>
<evidence type="ECO:0000250" key="1">
    <source>
        <dbReference type="UniProtKB" id="Q6AY70"/>
    </source>
</evidence>
<evidence type="ECO:0000250" key="2">
    <source>
        <dbReference type="UniProtKB" id="Q8BQR4"/>
    </source>
</evidence>
<evidence type="ECO:0000250" key="3">
    <source>
        <dbReference type="UniProtKB" id="Q9H9L4"/>
    </source>
</evidence>
<evidence type="ECO:0000256" key="4">
    <source>
        <dbReference type="SAM" id="MobiDB-lite"/>
    </source>
</evidence>
<evidence type="ECO:0000303" key="5">
    <source>
    </source>
</evidence>
<evidence type="ECO:0000305" key="6"/>
<name>KANL2_BOVIN</name>
<organism>
    <name type="scientific">Bos taurus</name>
    <name type="common">Bovine</name>
    <dbReference type="NCBI Taxonomy" id="9913"/>
    <lineage>
        <taxon>Eukaryota</taxon>
        <taxon>Metazoa</taxon>
        <taxon>Chordata</taxon>
        <taxon>Craniata</taxon>
        <taxon>Vertebrata</taxon>
        <taxon>Euteleostomi</taxon>
        <taxon>Mammalia</taxon>
        <taxon>Eutheria</taxon>
        <taxon>Laurasiatheria</taxon>
        <taxon>Artiodactyla</taxon>
        <taxon>Ruminantia</taxon>
        <taxon>Pecora</taxon>
        <taxon>Bovidae</taxon>
        <taxon>Bovinae</taxon>
        <taxon>Bos</taxon>
    </lineage>
</organism>
<dbReference type="EMBL" id="BC111221">
    <property type="protein sequence ID" value="AAI11222.1"/>
    <property type="molecule type" value="mRNA"/>
</dbReference>
<dbReference type="EMBL" id="BT021786">
    <property type="protein sequence ID" value="AAX46633.1"/>
    <property type="status" value="ALT_INIT"/>
    <property type="molecule type" value="mRNA"/>
</dbReference>
<dbReference type="RefSeq" id="NP_001019742.2">
    <molecule id="Q2NL14-1"/>
    <property type="nucleotide sequence ID" value="NM_001024571.2"/>
</dbReference>
<dbReference type="SMR" id="Q2NL14"/>
<dbReference type="FunCoup" id="Q2NL14">
    <property type="interactions" value="4347"/>
</dbReference>
<dbReference type="STRING" id="9913.ENSBTAP00000051777"/>
<dbReference type="PaxDb" id="9913-ENSBTAP00000051777"/>
<dbReference type="GeneID" id="540194"/>
<dbReference type="KEGG" id="bta:540194"/>
<dbReference type="CTD" id="54934"/>
<dbReference type="VEuPathDB" id="HostDB:ENSBTAG00000002693"/>
<dbReference type="eggNOG" id="ENOG502QTMA">
    <property type="taxonomic scope" value="Eukaryota"/>
</dbReference>
<dbReference type="HOGENOM" id="CLU_029808_3_0_1"/>
<dbReference type="InParanoid" id="Q2NL14"/>
<dbReference type="OMA" id="EGHEFCI"/>
<dbReference type="OrthoDB" id="677315at2759"/>
<dbReference type="TreeFam" id="TF324169"/>
<dbReference type="Reactome" id="R-BTA-3214847">
    <property type="pathway name" value="HATs acetylate histones"/>
</dbReference>
<dbReference type="Reactome" id="R-BTA-9772755">
    <property type="pathway name" value="Formation of WDR5-containing histone-modifying complexes"/>
</dbReference>
<dbReference type="Proteomes" id="UP000009136">
    <property type="component" value="Chromosome 5"/>
</dbReference>
<dbReference type="Bgee" id="ENSBTAG00000002693">
    <property type="expression patterns" value="Expressed in mammary gland and 105 other cell types or tissues"/>
</dbReference>
<dbReference type="GO" id="GO:0000123">
    <property type="term" value="C:histone acetyltransferase complex"/>
    <property type="evidence" value="ECO:0000250"/>
    <property type="project" value="UniProtKB"/>
</dbReference>
<dbReference type="GO" id="GO:0005739">
    <property type="term" value="C:mitochondrion"/>
    <property type="evidence" value="ECO:0007669"/>
    <property type="project" value="UniProtKB-SubCell"/>
</dbReference>
<dbReference type="GO" id="GO:0044545">
    <property type="term" value="C:NSL complex"/>
    <property type="evidence" value="ECO:0000318"/>
    <property type="project" value="GO_Central"/>
</dbReference>
<dbReference type="GO" id="GO:0005634">
    <property type="term" value="C:nucleus"/>
    <property type="evidence" value="ECO:0007669"/>
    <property type="project" value="UniProtKB-SubCell"/>
</dbReference>
<dbReference type="GO" id="GO:0006325">
    <property type="term" value="P:chromatin organization"/>
    <property type="evidence" value="ECO:0007669"/>
    <property type="project" value="UniProtKB-KW"/>
</dbReference>
<dbReference type="InterPro" id="IPR026316">
    <property type="entry name" value="NSL2"/>
</dbReference>
<dbReference type="InterPro" id="IPR025927">
    <property type="entry name" value="Potential_DNA-bd"/>
</dbReference>
<dbReference type="PANTHER" id="PTHR13453">
    <property type="entry name" value="KAT8 REGULATORY NSL COMPLEX SUBUNIT 2"/>
    <property type="match status" value="1"/>
</dbReference>
<dbReference type="PANTHER" id="PTHR13453:SF1">
    <property type="entry name" value="KAT8 REGULATORY NSL COMPLEX SUBUNIT 2"/>
    <property type="match status" value="1"/>
</dbReference>
<dbReference type="Pfam" id="PF13891">
    <property type="entry name" value="zf-C3Hc3H"/>
    <property type="match status" value="2"/>
</dbReference>
<feature type="chain" id="PRO_0000278290" description="KAT8 regulatory NSL complex subunit 2">
    <location>
        <begin position="1"/>
        <end position="458"/>
    </location>
</feature>
<feature type="region of interest" description="Disordered" evidence="4">
    <location>
        <begin position="126"/>
        <end position="182"/>
    </location>
</feature>
<feature type="region of interest" description="Required for interaction with other NSL complex members" evidence="2">
    <location>
        <begin position="308"/>
        <end position="364"/>
    </location>
</feature>
<feature type="region of interest" description="Disordered" evidence="4">
    <location>
        <begin position="419"/>
        <end position="458"/>
    </location>
</feature>
<feature type="compositionally biased region" description="Basic and acidic residues" evidence="4">
    <location>
        <begin position="135"/>
        <end position="144"/>
    </location>
</feature>
<feature type="compositionally biased region" description="Acidic residues" evidence="4">
    <location>
        <begin position="167"/>
        <end position="178"/>
    </location>
</feature>
<feature type="modified residue" description="Phosphothreonine" evidence="3">
    <location>
        <position position="131"/>
    </location>
</feature>
<feature type="modified residue" description="Phosphoserine" evidence="3">
    <location>
        <position position="147"/>
    </location>
</feature>
<feature type="modified residue" description="Phosphoserine" evidence="3">
    <location>
        <position position="149"/>
    </location>
</feature>
<feature type="modified residue" description="Phosphoserine" evidence="1">
    <location>
        <position position="168"/>
    </location>
</feature>
<feature type="modified residue" description="Phosphoserine" evidence="1">
    <location>
        <position position="172"/>
    </location>
</feature>
<feature type="modified residue" description="Phosphoserine" evidence="1">
    <location>
        <position position="175"/>
    </location>
</feature>
<feature type="cross-link" description="Glycyl lysine isopeptide (Lys-Gly) (interchain with G-Cter in SUMO2)" evidence="3">
    <location>
        <position position="78"/>
    </location>
</feature>
<feature type="splice variant" id="VSP_023264" description="In isoform 2." evidence="5">
    <original>HICQDTNQVLFKCCQGSEEVPCN</original>
    <variation>QKDATAIGDLLTLYSGLMERALD</variation>
    <location>
        <begin position="325"/>
        <end position="347"/>
    </location>
</feature>
<feature type="splice variant" id="VSP_023265" description="In isoform 2." evidence="5">
    <location>
        <begin position="348"/>
        <end position="458"/>
    </location>
</feature>